<keyword id="KW-0067">ATP-binding</keyword>
<keyword id="KW-0315">Glutamine amidotransferase</keyword>
<keyword id="KW-0332">GMP biosynthesis</keyword>
<keyword id="KW-0436">Ligase</keyword>
<keyword id="KW-0547">Nucleotide-binding</keyword>
<keyword id="KW-0658">Purine biosynthesis</keyword>
<comment type="function">
    <text evidence="1">Catalyzes the synthesis of GMP from XMP.</text>
</comment>
<comment type="catalytic activity">
    <reaction evidence="1">
        <text>XMP + L-glutamine + ATP + H2O = GMP + L-glutamate + AMP + diphosphate + 2 H(+)</text>
        <dbReference type="Rhea" id="RHEA:11680"/>
        <dbReference type="ChEBI" id="CHEBI:15377"/>
        <dbReference type="ChEBI" id="CHEBI:15378"/>
        <dbReference type="ChEBI" id="CHEBI:29985"/>
        <dbReference type="ChEBI" id="CHEBI:30616"/>
        <dbReference type="ChEBI" id="CHEBI:33019"/>
        <dbReference type="ChEBI" id="CHEBI:57464"/>
        <dbReference type="ChEBI" id="CHEBI:58115"/>
        <dbReference type="ChEBI" id="CHEBI:58359"/>
        <dbReference type="ChEBI" id="CHEBI:456215"/>
        <dbReference type="EC" id="6.3.5.2"/>
    </reaction>
</comment>
<comment type="pathway">
    <text evidence="1">Purine metabolism; GMP biosynthesis; GMP from XMP (L-Gln route): step 1/1.</text>
</comment>
<comment type="subunit">
    <text evidence="1">Homodimer.</text>
</comment>
<gene>
    <name evidence="1" type="primary">guaA</name>
    <name type="ordered locus">SEQ_1182</name>
</gene>
<reference key="1">
    <citation type="journal article" date="2009" name="PLoS Pathog.">
        <title>Genomic evidence for the evolution of Streptococcus equi: host restriction, increased virulence, and genetic exchange with human pathogens.</title>
        <authorList>
            <person name="Holden M.T.G."/>
            <person name="Heather Z."/>
            <person name="Paillot R."/>
            <person name="Steward K.F."/>
            <person name="Webb K."/>
            <person name="Ainslie F."/>
            <person name="Jourdan T."/>
            <person name="Bason N.C."/>
            <person name="Holroyd N.E."/>
            <person name="Mungall K."/>
            <person name="Quail M.A."/>
            <person name="Sanders M."/>
            <person name="Simmonds M."/>
            <person name="Willey D."/>
            <person name="Brooks K."/>
            <person name="Aanensen D.M."/>
            <person name="Spratt B.G."/>
            <person name="Jolley K.A."/>
            <person name="Maiden M.C.J."/>
            <person name="Kehoe M."/>
            <person name="Chanter N."/>
            <person name="Bentley S.D."/>
            <person name="Robinson C."/>
            <person name="Maskell D.J."/>
            <person name="Parkhill J."/>
            <person name="Waller A.S."/>
        </authorList>
    </citation>
    <scope>NUCLEOTIDE SEQUENCE [LARGE SCALE GENOMIC DNA]</scope>
    <source>
        <strain>4047</strain>
    </source>
</reference>
<proteinExistence type="inferred from homology"/>
<protein>
    <recommendedName>
        <fullName evidence="1">GMP synthase [glutamine-hydrolyzing]</fullName>
        <ecNumber evidence="1">6.3.5.2</ecNumber>
    </recommendedName>
    <alternativeName>
        <fullName evidence="1">GMP synthetase</fullName>
    </alternativeName>
    <alternativeName>
        <fullName evidence="1">Glutamine amidotransferase</fullName>
    </alternativeName>
</protein>
<sequence length="520" mass="57430">MTEISMLNDIQKIIVLDYGSQYNQLIARRIREFGVFSELKSHHITAQELRDINPIGIVLSGGPNSVYATDAFGIDPEIFELGIPILGICYGMQLITHTLGGKVVPAGQAGHREYGQSSLRLRSASALFAGTPDEQLVLMSHGDAVTEIPEGFHLVGDSNDCPYAAMENTKKRLYGIQFHPEVRHSVYGNDILKNFAISICGGRGDWSMDNFIDMQIAKIRETVGDRKVLLGLSGGVDSSVVGVLLQKAIGDQLTCIFVDHGLLRKNEGDQVMEMLGGRFGLNIIRVDASKRFLDLLAGVEDPEKKRKIIGNEFVYVFDDEASKLKGVDFLAQGTLYTDIIESGTETAQTIKSHHNVGGLPEDMQFELIEPLNTLFKDEVRALGTALGMPDEVVWRQPFPGPGLAIRVMGEITAEKLETVRESDAILREEIAKAGLERDVWQYFTVNTGVRSVGVMGDGRTYDYTIAIRAITSIDGMTADFAQLPWEVLKKISVRIVNEVDHVNRIVYDITSKPPATVEWE</sequence>
<dbReference type="EC" id="6.3.5.2" evidence="1"/>
<dbReference type="EMBL" id="FM204883">
    <property type="protein sequence ID" value="CAW93884.1"/>
    <property type="molecule type" value="Genomic_DNA"/>
</dbReference>
<dbReference type="RefSeq" id="WP_012679568.1">
    <property type="nucleotide sequence ID" value="NC_012471.1"/>
</dbReference>
<dbReference type="SMR" id="C0MAM2"/>
<dbReference type="KEGG" id="seu:SEQ_1182"/>
<dbReference type="HOGENOM" id="CLU_014340_0_5_9"/>
<dbReference type="OrthoDB" id="9802219at2"/>
<dbReference type="UniPathway" id="UPA00189">
    <property type="reaction ID" value="UER00296"/>
</dbReference>
<dbReference type="Proteomes" id="UP000001365">
    <property type="component" value="Chromosome"/>
</dbReference>
<dbReference type="GO" id="GO:0005829">
    <property type="term" value="C:cytosol"/>
    <property type="evidence" value="ECO:0007669"/>
    <property type="project" value="TreeGrafter"/>
</dbReference>
<dbReference type="GO" id="GO:0005524">
    <property type="term" value="F:ATP binding"/>
    <property type="evidence" value="ECO:0007669"/>
    <property type="project" value="UniProtKB-UniRule"/>
</dbReference>
<dbReference type="GO" id="GO:0003921">
    <property type="term" value="F:GMP synthase activity"/>
    <property type="evidence" value="ECO:0007669"/>
    <property type="project" value="InterPro"/>
</dbReference>
<dbReference type="CDD" id="cd01742">
    <property type="entry name" value="GATase1_GMP_Synthase"/>
    <property type="match status" value="1"/>
</dbReference>
<dbReference type="CDD" id="cd01997">
    <property type="entry name" value="GMP_synthase_C"/>
    <property type="match status" value="1"/>
</dbReference>
<dbReference type="FunFam" id="3.30.300.10:FF:000002">
    <property type="entry name" value="GMP synthase [glutamine-hydrolyzing]"/>
    <property type="match status" value="1"/>
</dbReference>
<dbReference type="FunFam" id="3.40.50.620:FF:000001">
    <property type="entry name" value="GMP synthase [glutamine-hydrolyzing]"/>
    <property type="match status" value="1"/>
</dbReference>
<dbReference type="FunFam" id="3.40.50.880:FF:000001">
    <property type="entry name" value="GMP synthase [glutamine-hydrolyzing]"/>
    <property type="match status" value="1"/>
</dbReference>
<dbReference type="Gene3D" id="3.30.300.10">
    <property type="match status" value="1"/>
</dbReference>
<dbReference type="Gene3D" id="3.40.50.880">
    <property type="match status" value="1"/>
</dbReference>
<dbReference type="Gene3D" id="3.40.50.620">
    <property type="entry name" value="HUPs"/>
    <property type="match status" value="1"/>
</dbReference>
<dbReference type="HAMAP" id="MF_00344">
    <property type="entry name" value="GMP_synthase"/>
    <property type="match status" value="1"/>
</dbReference>
<dbReference type="InterPro" id="IPR029062">
    <property type="entry name" value="Class_I_gatase-like"/>
</dbReference>
<dbReference type="InterPro" id="IPR017926">
    <property type="entry name" value="GATASE"/>
</dbReference>
<dbReference type="InterPro" id="IPR001674">
    <property type="entry name" value="GMP_synth_C"/>
</dbReference>
<dbReference type="InterPro" id="IPR004739">
    <property type="entry name" value="GMP_synth_GATase"/>
</dbReference>
<dbReference type="InterPro" id="IPR022955">
    <property type="entry name" value="GMP_synthase"/>
</dbReference>
<dbReference type="InterPro" id="IPR025777">
    <property type="entry name" value="GMPS_ATP_PPase_dom"/>
</dbReference>
<dbReference type="InterPro" id="IPR022310">
    <property type="entry name" value="NAD/GMP_synthase"/>
</dbReference>
<dbReference type="InterPro" id="IPR014729">
    <property type="entry name" value="Rossmann-like_a/b/a_fold"/>
</dbReference>
<dbReference type="NCBIfam" id="TIGR00884">
    <property type="entry name" value="guaA_Cterm"/>
    <property type="match status" value="1"/>
</dbReference>
<dbReference type="NCBIfam" id="TIGR00888">
    <property type="entry name" value="guaA_Nterm"/>
    <property type="match status" value="1"/>
</dbReference>
<dbReference type="NCBIfam" id="NF000848">
    <property type="entry name" value="PRK00074.1"/>
    <property type="match status" value="1"/>
</dbReference>
<dbReference type="PANTHER" id="PTHR11922:SF2">
    <property type="entry name" value="GMP SYNTHASE [GLUTAMINE-HYDROLYZING]"/>
    <property type="match status" value="1"/>
</dbReference>
<dbReference type="PANTHER" id="PTHR11922">
    <property type="entry name" value="GMP SYNTHASE-RELATED"/>
    <property type="match status" value="1"/>
</dbReference>
<dbReference type="Pfam" id="PF00117">
    <property type="entry name" value="GATase"/>
    <property type="match status" value="1"/>
</dbReference>
<dbReference type="Pfam" id="PF00958">
    <property type="entry name" value="GMP_synt_C"/>
    <property type="match status" value="1"/>
</dbReference>
<dbReference type="Pfam" id="PF02540">
    <property type="entry name" value="NAD_synthase"/>
    <property type="match status" value="1"/>
</dbReference>
<dbReference type="PRINTS" id="PR00097">
    <property type="entry name" value="ANTSNTHASEII"/>
</dbReference>
<dbReference type="PRINTS" id="PR00099">
    <property type="entry name" value="CPSGATASE"/>
</dbReference>
<dbReference type="PRINTS" id="PR00096">
    <property type="entry name" value="GATASE"/>
</dbReference>
<dbReference type="SUPFAM" id="SSF52402">
    <property type="entry name" value="Adenine nucleotide alpha hydrolases-like"/>
    <property type="match status" value="1"/>
</dbReference>
<dbReference type="SUPFAM" id="SSF52317">
    <property type="entry name" value="Class I glutamine amidotransferase-like"/>
    <property type="match status" value="1"/>
</dbReference>
<dbReference type="SUPFAM" id="SSF54810">
    <property type="entry name" value="GMP synthetase C-terminal dimerisation domain"/>
    <property type="match status" value="1"/>
</dbReference>
<dbReference type="PROSITE" id="PS51273">
    <property type="entry name" value="GATASE_TYPE_1"/>
    <property type="match status" value="1"/>
</dbReference>
<dbReference type="PROSITE" id="PS51553">
    <property type="entry name" value="GMPS_ATP_PPASE"/>
    <property type="match status" value="1"/>
</dbReference>
<evidence type="ECO:0000255" key="1">
    <source>
        <dbReference type="HAMAP-Rule" id="MF_00344"/>
    </source>
</evidence>
<feature type="chain" id="PRO_1000133382" description="GMP synthase [glutamine-hydrolyzing]">
    <location>
        <begin position="1"/>
        <end position="520"/>
    </location>
</feature>
<feature type="domain" description="Glutamine amidotransferase type-1" evidence="1">
    <location>
        <begin position="12"/>
        <end position="205"/>
    </location>
</feature>
<feature type="domain" description="GMPS ATP-PPase" evidence="1">
    <location>
        <begin position="206"/>
        <end position="395"/>
    </location>
</feature>
<feature type="active site" description="Nucleophile" evidence="1">
    <location>
        <position position="89"/>
    </location>
</feature>
<feature type="active site" evidence="1">
    <location>
        <position position="179"/>
    </location>
</feature>
<feature type="active site" evidence="1">
    <location>
        <position position="181"/>
    </location>
</feature>
<feature type="binding site" evidence="1">
    <location>
        <begin position="233"/>
        <end position="239"/>
    </location>
    <ligand>
        <name>ATP</name>
        <dbReference type="ChEBI" id="CHEBI:30616"/>
    </ligand>
</feature>
<organism>
    <name type="scientific">Streptococcus equi subsp. equi (strain 4047)</name>
    <dbReference type="NCBI Taxonomy" id="553482"/>
    <lineage>
        <taxon>Bacteria</taxon>
        <taxon>Bacillati</taxon>
        <taxon>Bacillota</taxon>
        <taxon>Bacilli</taxon>
        <taxon>Lactobacillales</taxon>
        <taxon>Streptococcaceae</taxon>
        <taxon>Streptococcus</taxon>
    </lineage>
</organism>
<name>GUAA_STRE4</name>
<accession>C0MAM2</accession>